<comment type="catalytic activity">
    <reaction evidence="1">
        <text>tRNA(Cys) + L-cysteine + ATP = L-cysteinyl-tRNA(Cys) + AMP + diphosphate</text>
        <dbReference type="Rhea" id="RHEA:17773"/>
        <dbReference type="Rhea" id="RHEA-COMP:9661"/>
        <dbReference type="Rhea" id="RHEA-COMP:9679"/>
        <dbReference type="ChEBI" id="CHEBI:30616"/>
        <dbReference type="ChEBI" id="CHEBI:33019"/>
        <dbReference type="ChEBI" id="CHEBI:35235"/>
        <dbReference type="ChEBI" id="CHEBI:78442"/>
        <dbReference type="ChEBI" id="CHEBI:78517"/>
        <dbReference type="ChEBI" id="CHEBI:456215"/>
        <dbReference type="EC" id="6.1.1.16"/>
    </reaction>
</comment>
<comment type="cofactor">
    <cofactor evidence="1">
        <name>Zn(2+)</name>
        <dbReference type="ChEBI" id="CHEBI:29105"/>
    </cofactor>
    <text evidence="1">Binds 1 zinc ion per subunit.</text>
</comment>
<comment type="subunit">
    <text evidence="1">Monomer.</text>
</comment>
<comment type="subcellular location">
    <subcellularLocation>
        <location evidence="1">Cytoplasm</location>
    </subcellularLocation>
</comment>
<comment type="similarity">
    <text evidence="1">Belongs to the class-I aminoacyl-tRNA synthetase family.</text>
</comment>
<protein>
    <recommendedName>
        <fullName evidence="1">Cysteine--tRNA ligase 1</fullName>
        <ecNumber evidence="1">6.1.1.16</ecNumber>
    </recommendedName>
    <alternativeName>
        <fullName evidence="1">Cysteinyl-tRNA synthetase 1</fullName>
        <shortName evidence="1">CysRS 1</shortName>
    </alternativeName>
</protein>
<proteinExistence type="inferred from homology"/>
<gene>
    <name evidence="1" type="primary">cysS1</name>
    <name type="ordered locus">TW423</name>
</gene>
<accession>Q83HS8</accession>
<reference key="1">
    <citation type="journal article" date="2003" name="Lancet">
        <title>Sequencing and analysis of the genome of the Whipple's disease bacterium Tropheryma whipplei.</title>
        <authorList>
            <person name="Bentley S.D."/>
            <person name="Maiwald M."/>
            <person name="Murphy L.D."/>
            <person name="Pallen M.J."/>
            <person name="Yeats C.A."/>
            <person name="Dover L.G."/>
            <person name="Norbertczak H.T."/>
            <person name="Besra G.S."/>
            <person name="Quail M.A."/>
            <person name="Harris D.E."/>
            <person name="von Herbay A."/>
            <person name="Goble A."/>
            <person name="Rutter S."/>
            <person name="Squares R."/>
            <person name="Squares S."/>
            <person name="Barrell B.G."/>
            <person name="Parkhill J."/>
            <person name="Relman D.A."/>
        </authorList>
    </citation>
    <scope>NUCLEOTIDE SEQUENCE [LARGE SCALE GENOMIC DNA]</scope>
    <source>
        <strain>TW08/27</strain>
    </source>
</reference>
<dbReference type="EC" id="6.1.1.16" evidence="1"/>
<dbReference type="EMBL" id="BX251411">
    <property type="protein sequence ID" value="CAD67093.1"/>
    <property type="molecule type" value="Genomic_DNA"/>
</dbReference>
<dbReference type="SMR" id="Q83HS8"/>
<dbReference type="GeneID" id="67388200"/>
<dbReference type="KEGG" id="tws:TW423"/>
<dbReference type="HOGENOM" id="CLU_013528_0_1_11"/>
<dbReference type="GO" id="GO:0005829">
    <property type="term" value="C:cytosol"/>
    <property type="evidence" value="ECO:0007669"/>
    <property type="project" value="TreeGrafter"/>
</dbReference>
<dbReference type="GO" id="GO:0005524">
    <property type="term" value="F:ATP binding"/>
    <property type="evidence" value="ECO:0007669"/>
    <property type="project" value="UniProtKB-UniRule"/>
</dbReference>
<dbReference type="GO" id="GO:0004817">
    <property type="term" value="F:cysteine-tRNA ligase activity"/>
    <property type="evidence" value="ECO:0007669"/>
    <property type="project" value="UniProtKB-UniRule"/>
</dbReference>
<dbReference type="GO" id="GO:0008270">
    <property type="term" value="F:zinc ion binding"/>
    <property type="evidence" value="ECO:0007669"/>
    <property type="project" value="UniProtKB-UniRule"/>
</dbReference>
<dbReference type="GO" id="GO:0006423">
    <property type="term" value="P:cysteinyl-tRNA aminoacylation"/>
    <property type="evidence" value="ECO:0007669"/>
    <property type="project" value="UniProtKB-UniRule"/>
</dbReference>
<dbReference type="CDD" id="cd00672">
    <property type="entry name" value="CysRS_core"/>
    <property type="match status" value="1"/>
</dbReference>
<dbReference type="Gene3D" id="1.20.120.1910">
    <property type="entry name" value="Cysteine-tRNA ligase, C-terminal anti-codon recognition domain"/>
    <property type="match status" value="1"/>
</dbReference>
<dbReference type="Gene3D" id="3.40.50.620">
    <property type="entry name" value="HUPs"/>
    <property type="match status" value="1"/>
</dbReference>
<dbReference type="HAMAP" id="MF_00041">
    <property type="entry name" value="Cys_tRNA_synth"/>
    <property type="match status" value="1"/>
</dbReference>
<dbReference type="InterPro" id="IPR015803">
    <property type="entry name" value="Cys-tRNA-ligase"/>
</dbReference>
<dbReference type="InterPro" id="IPR015273">
    <property type="entry name" value="Cys-tRNA-synt_Ia_DALR"/>
</dbReference>
<dbReference type="InterPro" id="IPR024909">
    <property type="entry name" value="Cys-tRNA/MSH_ligase"/>
</dbReference>
<dbReference type="InterPro" id="IPR014729">
    <property type="entry name" value="Rossmann-like_a/b/a_fold"/>
</dbReference>
<dbReference type="InterPro" id="IPR032678">
    <property type="entry name" value="tRNA-synt_1_cat_dom"/>
</dbReference>
<dbReference type="InterPro" id="IPR009080">
    <property type="entry name" value="tRNAsynth_Ia_anticodon-bd"/>
</dbReference>
<dbReference type="NCBIfam" id="TIGR00435">
    <property type="entry name" value="cysS"/>
    <property type="match status" value="1"/>
</dbReference>
<dbReference type="PANTHER" id="PTHR10890:SF30">
    <property type="entry name" value="CYSTEINE--TRNA LIGASE"/>
    <property type="match status" value="1"/>
</dbReference>
<dbReference type="PANTHER" id="PTHR10890">
    <property type="entry name" value="CYSTEINYL-TRNA SYNTHETASE"/>
    <property type="match status" value="1"/>
</dbReference>
<dbReference type="Pfam" id="PF09190">
    <property type="entry name" value="DALR_2"/>
    <property type="match status" value="1"/>
</dbReference>
<dbReference type="Pfam" id="PF01406">
    <property type="entry name" value="tRNA-synt_1e"/>
    <property type="match status" value="1"/>
</dbReference>
<dbReference type="PRINTS" id="PR00983">
    <property type="entry name" value="TRNASYNTHCYS"/>
</dbReference>
<dbReference type="SUPFAM" id="SSF47323">
    <property type="entry name" value="Anticodon-binding domain of a subclass of class I aminoacyl-tRNA synthetases"/>
    <property type="match status" value="1"/>
</dbReference>
<dbReference type="SUPFAM" id="SSF52374">
    <property type="entry name" value="Nucleotidylyl transferase"/>
    <property type="match status" value="1"/>
</dbReference>
<organism>
    <name type="scientific">Tropheryma whipplei (strain TW08/27)</name>
    <name type="common">Whipple's bacillus</name>
    <dbReference type="NCBI Taxonomy" id="218496"/>
    <lineage>
        <taxon>Bacteria</taxon>
        <taxon>Bacillati</taxon>
        <taxon>Actinomycetota</taxon>
        <taxon>Actinomycetes</taxon>
        <taxon>Micrococcales</taxon>
        <taxon>Tropherymataceae</taxon>
        <taxon>Tropheryma</taxon>
    </lineage>
</organism>
<sequence length="466" mass="52787">MTLNLYDTLSRRIVTLDCRDRVELYVCGPTVQSPPHIGHMRSGVVYDCLRRWLEYKGLPVLYVRNITDIDDKILASARSTETGETWWQIAYRVSGLFNEAYKALFVKPPDYEPLVTAHIPDIIKAIEILIQKNVAYRAMDGSGNVFFSIDKHPSYGELTDQKDLLIDDCITPGKRDPRDFTLWKEKKDTDPDLAFWESPWGPGRPGWHIECSVMATKYLGTRFAIHGGGVDLRFPHHENELAQARALGAHFADIWMHTGAVNVEGIKMSKSFGNSVLVQDALSKVSPSALRYYFLTAHYRSTLNYTENSLSQACNTWNKLQGCIYRVYDYLEREGYENDFCVSQLNTDFSTSLDNDLNIPEALAIVHNKVREMNRLVDTQADMQYLGNTLSEVVEMLSILCPIDHKITYTSGAQDNSKALLQVLLEARDRARSKGDFYTSDLLRELLAEADISVSDGHVSYGSPRG</sequence>
<keyword id="KW-0030">Aminoacyl-tRNA synthetase</keyword>
<keyword id="KW-0067">ATP-binding</keyword>
<keyword id="KW-0963">Cytoplasm</keyword>
<keyword id="KW-0436">Ligase</keyword>
<keyword id="KW-0479">Metal-binding</keyword>
<keyword id="KW-0547">Nucleotide-binding</keyword>
<keyword id="KW-0648">Protein biosynthesis</keyword>
<keyword id="KW-0862">Zinc</keyword>
<feature type="chain" id="PRO_0000159512" description="Cysteine--tRNA ligase 1">
    <location>
        <begin position="1"/>
        <end position="466"/>
    </location>
</feature>
<feature type="short sequence motif" description="'HIGH' region">
    <location>
        <begin position="29"/>
        <end position="39"/>
    </location>
</feature>
<feature type="short sequence motif" description="'KMSKS' region">
    <location>
        <begin position="267"/>
        <end position="271"/>
    </location>
</feature>
<feature type="binding site" evidence="1">
    <location>
        <position position="27"/>
    </location>
    <ligand>
        <name>Zn(2+)</name>
        <dbReference type="ChEBI" id="CHEBI:29105"/>
    </ligand>
</feature>
<feature type="binding site" evidence="1">
    <location>
        <position position="211"/>
    </location>
    <ligand>
        <name>Zn(2+)</name>
        <dbReference type="ChEBI" id="CHEBI:29105"/>
    </ligand>
</feature>
<feature type="binding site" evidence="1">
    <location>
        <position position="236"/>
    </location>
    <ligand>
        <name>Zn(2+)</name>
        <dbReference type="ChEBI" id="CHEBI:29105"/>
    </ligand>
</feature>
<feature type="binding site" evidence="1">
    <location>
        <position position="240"/>
    </location>
    <ligand>
        <name>Zn(2+)</name>
        <dbReference type="ChEBI" id="CHEBI:29105"/>
    </ligand>
</feature>
<feature type="binding site" evidence="1">
    <location>
        <position position="270"/>
    </location>
    <ligand>
        <name>ATP</name>
        <dbReference type="ChEBI" id="CHEBI:30616"/>
    </ligand>
</feature>
<name>SYC1_TROW8</name>
<evidence type="ECO:0000255" key="1">
    <source>
        <dbReference type="HAMAP-Rule" id="MF_00041"/>
    </source>
</evidence>